<name>MDTC_YERE8</name>
<evidence type="ECO:0000255" key="1">
    <source>
        <dbReference type="HAMAP-Rule" id="MF_01424"/>
    </source>
</evidence>
<comment type="subunit">
    <text evidence="1">Part of a tripartite efflux system composed of MdtA, MdtB and MdtC. MdtC forms a heteromultimer with MdtB.</text>
</comment>
<comment type="subcellular location">
    <subcellularLocation>
        <location evidence="1">Cell inner membrane</location>
        <topology evidence="1">Multi-pass membrane protein</topology>
    </subcellularLocation>
</comment>
<comment type="similarity">
    <text evidence="1">Belongs to the resistance-nodulation-cell division (RND) (TC 2.A.6) family. MdtC subfamily.</text>
</comment>
<keyword id="KW-0997">Cell inner membrane</keyword>
<keyword id="KW-1003">Cell membrane</keyword>
<keyword id="KW-0472">Membrane</keyword>
<keyword id="KW-0812">Transmembrane</keyword>
<keyword id="KW-1133">Transmembrane helix</keyword>
<keyword id="KW-0813">Transport</keyword>
<reference key="1">
    <citation type="journal article" date="2006" name="PLoS Genet.">
        <title>The complete genome sequence and comparative genome analysis of the high pathogenicity Yersinia enterocolitica strain 8081.</title>
        <authorList>
            <person name="Thomson N.R."/>
            <person name="Howard S."/>
            <person name="Wren B.W."/>
            <person name="Holden M.T.G."/>
            <person name="Crossman L."/>
            <person name="Challis G.L."/>
            <person name="Churcher C."/>
            <person name="Mungall K."/>
            <person name="Brooks K."/>
            <person name="Chillingworth T."/>
            <person name="Feltwell T."/>
            <person name="Abdellah Z."/>
            <person name="Hauser H."/>
            <person name="Jagels K."/>
            <person name="Maddison M."/>
            <person name="Moule S."/>
            <person name="Sanders M."/>
            <person name="Whitehead S."/>
            <person name="Quail M.A."/>
            <person name="Dougan G."/>
            <person name="Parkhill J."/>
            <person name="Prentice M.B."/>
        </authorList>
    </citation>
    <scope>NUCLEOTIDE SEQUENCE [LARGE SCALE GENOMIC DNA]</scope>
    <source>
        <strain>NCTC 13174 / 8081</strain>
    </source>
</reference>
<accession>A1JKW9</accession>
<gene>
    <name evidence="1" type="primary">mdtC</name>
    <name type="ordered locus">YE1107</name>
</gene>
<organism>
    <name type="scientific">Yersinia enterocolitica serotype O:8 / biotype 1B (strain NCTC 13174 / 8081)</name>
    <dbReference type="NCBI Taxonomy" id="393305"/>
    <lineage>
        <taxon>Bacteria</taxon>
        <taxon>Pseudomonadati</taxon>
        <taxon>Pseudomonadota</taxon>
        <taxon>Gammaproteobacteria</taxon>
        <taxon>Enterobacterales</taxon>
        <taxon>Yersiniaceae</taxon>
        <taxon>Yersinia</taxon>
    </lineage>
</organism>
<sequence>MKFFALFIQRPVATTLLTLAITLSGVIGFSLLPVSPLPQVDYPVIMVSASMPGADPETMASSIATPLERALGRIAGVNEMTSTSSLGSTRIILQFDLSRDINGAARDVQAALNAAQSLLPSGMPNRPTYRKMNPSDAPIMIMTLTSDTFSQGQLYDFASTQLAQKIAQTEGVSDVSVGGSSLPAVRVELNPSALFNQGVSLDAVRQAISAANVRRPQGSIDSSEQHWQVQANDEIKTAEGYRPLIIHYNNGSPVRLQDVANIVDSVQDVRNAGMSDGKPAVLLVISREPGANIIATVDRIRAELPALRASIPASIELNIAQDRSPTIRASLDEVERSLVIAVALVILVVFLFLRSGRATLIPAVAVPVSLIGTFTAMYLCGFSLNNLSLMALTIATGFVVDDAIVVLENISRHLEAGVKPMVAALRGVREVGFTVLSMSISLVAVFIPLLLMEGLPGRLFREFAVTLSVAIGISLVISLTLTPMMCAHLLRAQPTGKQQRIRGFGKVLLAIQQGYGRSLNWVLGHTRWVMVVLLSTIALNVWLYISIPKTFFPEQDTGRMMGFIQADQSISFQAMQQKLKDFMKIVSADPAVDNVTGFTGGSRTNSGSMFISLKPLSERSETAQQVITRLRGKLAKEPGASLFLSPVQDIRVGGRQSNASYQFTLLADDLAALREWEPKVRAALSKLPELADVNSDQQDKGSEMALTYDRETMARLGIDVSDANALLNNAFGQRQISTIYQPLNQYKVVMEVAPQYTQDVSSLDKMFVINSNGQSIPLSYFAKWQPANAPLSVNHQGLSAASTISFNLPDGGSLSEATAAVERAMTELGVPSTVRGMFAGTAQVFQDTLKSQLWLIMAAIATVYIVLGILYESYVHPLTILSTLPSAGVGALLALELFDAPFSLIALIGIMLLIGIVKKNAIMMVDFALDAQRNGNLNARDAIFQASLLRFRPILMTTLAALFGALPLVISSGDGAELRQPLGITIVGGLVMSQLLTLYTTPVVYLYFDRLRSRFSKKPLMRLE</sequence>
<feature type="chain" id="PRO_1000024320" description="Multidrug resistance protein MdtC">
    <location>
        <begin position="1"/>
        <end position="1024"/>
    </location>
</feature>
<feature type="transmembrane region" description="Helical" evidence="1">
    <location>
        <begin position="12"/>
        <end position="32"/>
    </location>
</feature>
<feature type="transmembrane region" description="Helical" evidence="1">
    <location>
        <begin position="333"/>
        <end position="353"/>
    </location>
</feature>
<feature type="transmembrane region" description="Helical" evidence="1">
    <location>
        <begin position="360"/>
        <end position="380"/>
    </location>
</feature>
<feature type="transmembrane region" description="Helical" evidence="1">
    <location>
        <begin position="387"/>
        <end position="407"/>
    </location>
</feature>
<feature type="transmembrane region" description="Helical" evidence="1">
    <location>
        <begin position="431"/>
        <end position="451"/>
    </location>
</feature>
<feature type="transmembrane region" description="Helical" evidence="1">
    <location>
        <begin position="463"/>
        <end position="483"/>
    </location>
</feature>
<feature type="transmembrane region" description="Helical" evidence="1">
    <location>
        <begin position="528"/>
        <end position="548"/>
    </location>
</feature>
<feature type="transmembrane region" description="Helical" evidence="1">
    <location>
        <begin position="853"/>
        <end position="873"/>
    </location>
</feature>
<feature type="transmembrane region" description="Helical" evidence="1">
    <location>
        <begin position="875"/>
        <end position="895"/>
    </location>
</feature>
<feature type="transmembrane region" description="Helical" evidence="1">
    <location>
        <begin position="897"/>
        <end position="917"/>
    </location>
</feature>
<feature type="transmembrane region" description="Helical" evidence="1">
    <location>
        <begin position="953"/>
        <end position="973"/>
    </location>
</feature>
<feature type="transmembrane region" description="Helical" evidence="1">
    <location>
        <begin position="984"/>
        <end position="1004"/>
    </location>
</feature>
<proteinExistence type="inferred from homology"/>
<dbReference type="EMBL" id="AM286415">
    <property type="protein sequence ID" value="CAL11203.1"/>
    <property type="molecule type" value="Genomic_DNA"/>
</dbReference>
<dbReference type="RefSeq" id="WP_011815800.1">
    <property type="nucleotide sequence ID" value="NC_008800.1"/>
</dbReference>
<dbReference type="RefSeq" id="YP_001005437.1">
    <property type="nucleotide sequence ID" value="NC_008800.1"/>
</dbReference>
<dbReference type="SMR" id="A1JKW9"/>
<dbReference type="KEGG" id="yen:YE1107"/>
<dbReference type="PATRIC" id="fig|393305.7.peg.1208"/>
<dbReference type="eggNOG" id="COG0841">
    <property type="taxonomic scope" value="Bacteria"/>
</dbReference>
<dbReference type="HOGENOM" id="CLU_002755_1_2_6"/>
<dbReference type="OrthoDB" id="9757904at2"/>
<dbReference type="Proteomes" id="UP000000642">
    <property type="component" value="Chromosome"/>
</dbReference>
<dbReference type="GO" id="GO:0005886">
    <property type="term" value="C:plasma membrane"/>
    <property type="evidence" value="ECO:0007669"/>
    <property type="project" value="UniProtKB-SubCell"/>
</dbReference>
<dbReference type="GO" id="GO:0042910">
    <property type="term" value="F:xenobiotic transmembrane transporter activity"/>
    <property type="evidence" value="ECO:0007669"/>
    <property type="project" value="TreeGrafter"/>
</dbReference>
<dbReference type="FunFam" id="1.20.1640.10:FF:000001">
    <property type="entry name" value="Efflux pump membrane transporter"/>
    <property type="match status" value="1"/>
</dbReference>
<dbReference type="FunFam" id="3.30.70.1430:FF:000001">
    <property type="entry name" value="Efflux pump membrane transporter"/>
    <property type="match status" value="1"/>
</dbReference>
<dbReference type="FunFam" id="3.30.2090.10:FF:000004">
    <property type="entry name" value="Multidrug resistance protein MdtC"/>
    <property type="match status" value="1"/>
</dbReference>
<dbReference type="Gene3D" id="3.30.70.1430">
    <property type="entry name" value="Multidrug efflux transporter AcrB pore domain"/>
    <property type="match status" value="2"/>
</dbReference>
<dbReference type="Gene3D" id="3.30.70.1440">
    <property type="entry name" value="Multidrug efflux transporter AcrB pore domain"/>
    <property type="match status" value="1"/>
</dbReference>
<dbReference type="Gene3D" id="3.30.70.1320">
    <property type="entry name" value="Multidrug efflux transporter AcrB pore domain like"/>
    <property type="match status" value="1"/>
</dbReference>
<dbReference type="Gene3D" id="3.30.2090.10">
    <property type="entry name" value="Multidrug efflux transporter AcrB TolC docking domain, DN and DC subdomains"/>
    <property type="match status" value="2"/>
</dbReference>
<dbReference type="Gene3D" id="1.20.1640.10">
    <property type="entry name" value="Multidrug efflux transporter AcrB transmembrane domain"/>
    <property type="match status" value="2"/>
</dbReference>
<dbReference type="HAMAP" id="MF_01424">
    <property type="entry name" value="MdtC"/>
    <property type="match status" value="1"/>
</dbReference>
<dbReference type="InterPro" id="IPR027463">
    <property type="entry name" value="AcrB_DN_DC_subdom"/>
</dbReference>
<dbReference type="InterPro" id="IPR001036">
    <property type="entry name" value="Acrflvin-R"/>
</dbReference>
<dbReference type="InterPro" id="IPR023931">
    <property type="entry name" value="Multidrug-R_MdtC"/>
</dbReference>
<dbReference type="NCBIfam" id="NF007905">
    <property type="entry name" value="PRK10614.1"/>
    <property type="match status" value="1"/>
</dbReference>
<dbReference type="NCBIfam" id="NF033617">
    <property type="entry name" value="RND_permease_2"/>
    <property type="match status" value="1"/>
</dbReference>
<dbReference type="PANTHER" id="PTHR32063">
    <property type="match status" value="1"/>
</dbReference>
<dbReference type="PANTHER" id="PTHR32063:SF34">
    <property type="entry name" value="MULTIDRUG RESISTANCE PROTEIN MDTC"/>
    <property type="match status" value="1"/>
</dbReference>
<dbReference type="Pfam" id="PF00873">
    <property type="entry name" value="ACR_tran"/>
    <property type="match status" value="1"/>
</dbReference>
<dbReference type="PRINTS" id="PR00702">
    <property type="entry name" value="ACRIFLAVINRP"/>
</dbReference>
<dbReference type="SUPFAM" id="SSF82693">
    <property type="entry name" value="Multidrug efflux transporter AcrB pore domain, PN1, PN2, PC1 and PC2 subdomains"/>
    <property type="match status" value="4"/>
</dbReference>
<dbReference type="SUPFAM" id="SSF82714">
    <property type="entry name" value="Multidrug efflux transporter AcrB TolC docking domain, DN and DC subdomains"/>
    <property type="match status" value="2"/>
</dbReference>
<dbReference type="SUPFAM" id="SSF82866">
    <property type="entry name" value="Multidrug efflux transporter AcrB transmembrane domain"/>
    <property type="match status" value="2"/>
</dbReference>
<protein>
    <recommendedName>
        <fullName evidence="1">Multidrug resistance protein MdtC</fullName>
    </recommendedName>
    <alternativeName>
        <fullName evidence="1">Multidrug transporter MdtC</fullName>
    </alternativeName>
</protein>